<accession>P0DPO4</accession>
<accession>A0A385XJS5</accession>
<evidence type="ECO:0000255" key="1"/>
<evidence type="ECO:0000269" key="2">
    <source>
    </source>
</evidence>
<evidence type="ECO:0000303" key="3">
    <source>
    </source>
</evidence>
<evidence type="ECO:0000305" key="4"/>
<proteinExistence type="evidence at protein level"/>
<comment type="subcellular location">
    <subcellularLocation>
        <location evidence="4">Cell inner membrane</location>
        <topology evidence="1">Single-pass membrane protein</topology>
    </subcellularLocation>
</comment>
<comment type="induction">
    <text evidence="2">Expressed approximately equally in exponential and stationary phases (at protein level).</text>
</comment>
<comment type="miscellaneous">
    <text evidence="4">Encoded in the Rac prophage.</text>
</comment>
<gene>
    <name evidence="3" type="primary">ynaM</name>
    <name type="ordered locus">b4744</name>
</gene>
<sequence>MNSILIITSLLIIFSIFSHALIKLGIGISNNPDKTDV</sequence>
<name>YNAM_ECOLI</name>
<dbReference type="EMBL" id="U00096">
    <property type="protein sequence ID" value="AYC08207.1"/>
    <property type="molecule type" value="Genomic_DNA"/>
</dbReference>
<dbReference type="SMR" id="P0DPO4"/>
<dbReference type="EnsemblBacteria" id="AYC08207">
    <property type="protein sequence ID" value="AYC08207"/>
    <property type="gene ID" value="b4744"/>
</dbReference>
<dbReference type="InParanoid" id="P0DPO4"/>
<dbReference type="BioCyc" id="EcoCyc:MONOMER0-4421"/>
<dbReference type="PRO" id="PR:P0DPO4"/>
<dbReference type="Proteomes" id="UP000000625">
    <property type="component" value="Chromosome"/>
</dbReference>
<dbReference type="GO" id="GO:0005886">
    <property type="term" value="C:plasma membrane"/>
    <property type="evidence" value="ECO:0007669"/>
    <property type="project" value="UniProtKB-SubCell"/>
</dbReference>
<dbReference type="InterPro" id="IPR048193">
    <property type="entry name" value="YnaM_YnfT"/>
</dbReference>
<dbReference type="NCBIfam" id="NF041477">
    <property type="entry name" value="YnaM_YnfT_fam"/>
    <property type="match status" value="1"/>
</dbReference>
<dbReference type="Pfam" id="PF23676">
    <property type="entry name" value="YnaM"/>
    <property type="match status" value="1"/>
</dbReference>
<keyword id="KW-0997">Cell inner membrane</keyword>
<keyword id="KW-1003">Cell membrane</keyword>
<keyword id="KW-0472">Membrane</keyword>
<keyword id="KW-1185">Reference proteome</keyword>
<keyword id="KW-0812">Transmembrane</keyword>
<keyword id="KW-1133">Transmembrane helix</keyword>
<organism>
    <name type="scientific">Escherichia coli (strain K12)</name>
    <dbReference type="NCBI Taxonomy" id="83333"/>
    <lineage>
        <taxon>Bacteria</taxon>
        <taxon>Pseudomonadati</taxon>
        <taxon>Pseudomonadota</taxon>
        <taxon>Gammaproteobacteria</taxon>
        <taxon>Enterobacterales</taxon>
        <taxon>Enterobacteriaceae</taxon>
        <taxon>Escherichia</taxon>
    </lineage>
</organism>
<protein>
    <recommendedName>
        <fullName evidence="3">Protein YnaM</fullName>
    </recommendedName>
</protein>
<reference key="1">
    <citation type="journal article" date="1997" name="Science">
        <title>The complete genome sequence of Escherichia coli K-12.</title>
        <authorList>
            <person name="Blattner F.R."/>
            <person name="Plunkett G. III"/>
            <person name="Bloch C.A."/>
            <person name="Perna N.T."/>
            <person name="Burland V."/>
            <person name="Riley M."/>
            <person name="Collado-Vides J."/>
            <person name="Glasner J.D."/>
            <person name="Rode C.K."/>
            <person name="Mayhew G.F."/>
            <person name="Gregor J."/>
            <person name="Davis N.W."/>
            <person name="Kirkpatrick H.A."/>
            <person name="Goeden M.A."/>
            <person name="Rose D.J."/>
            <person name="Mau B."/>
            <person name="Shao Y."/>
        </authorList>
    </citation>
    <scope>NUCLEOTIDE SEQUENCE [LARGE SCALE GENOMIC DNA]</scope>
    <source>
        <strain>K12 / MG1655 / ATCC 47076</strain>
    </source>
</reference>
<reference key="2">
    <citation type="journal article" date="2018" name="Proteomics">
        <title>Identifying new small proteins in Escherichia coli.</title>
        <authorList>
            <person name="VanOrsdel C.E."/>
            <person name="Kelly J.P."/>
            <person name="Burke B.N."/>
            <person name="Lein C.D."/>
            <person name="Oufiero C.E."/>
            <person name="Sanchez J.F."/>
            <person name="Wimmers L.E."/>
            <person name="Hearn D.J."/>
            <person name="Abuikhdair F.J."/>
            <person name="Barnhart K.R."/>
            <person name="Duley M.L."/>
            <person name="Ernst S.E.G."/>
            <person name="Kenerson B.A."/>
            <person name="Serafin A.J."/>
            <person name="Hemm M.R."/>
        </authorList>
    </citation>
    <scope>IDENTIFICATION</scope>
    <scope>INDUCTION</scope>
</reference>
<feature type="chain" id="PRO_0000445172" description="Protein YnaM">
    <location>
        <begin position="1"/>
        <end position="37"/>
    </location>
</feature>
<feature type="transmembrane region" description="Helical" evidence="1">
    <location>
        <begin position="4"/>
        <end position="24"/>
    </location>
</feature>